<reference key="1">
    <citation type="journal article" date="2021" name="Microbiol. Resour. Announc.">
        <title>Complete Genome Sequence of Bifidobacterium longum subsp. longum JCM7052.</title>
        <authorList>
            <person name="Yamamoto I."/>
            <person name="Ueno Y."/>
            <person name="Geshi M."/>
            <person name="Inagaki Y."/>
            <person name="Odamaki T."/>
            <person name="Fujita K."/>
        </authorList>
    </citation>
    <scope>NUCLEOTIDE SEQUENCE [LARGE SCALE GENOMIC DNA]</scope>
    <source>
        <strain>JCM 7052 / CGMCC 1.3013 / IV-52</strain>
    </source>
</reference>
<reference key="2">
    <citation type="journal article" date="2021" name="Appl. Environ. Microbiol.">
        <title>Novel 3-O-alpha-d-Galactosyl-alpha-l-Arabinofuranosidase for the Assimilation of Gum Arabic Arabinogalactan Protein in Bifidobacterium longum subsp. longum.</title>
        <authorList>
            <person name="Sasaki Y."/>
            <person name="Horigome A."/>
            <person name="Odamaki T."/>
            <person name="Xiao J.Z."/>
            <person name="Ishiwata A."/>
            <person name="Ito Y."/>
            <person name="Kitahara K."/>
            <person name="Fujita K."/>
        </authorList>
    </citation>
    <scope>FUNCTION</scope>
    <scope>CATALYTIC ACTIVITY</scope>
    <scope>BIOPHYSICOCHEMICAL PROPERTIES</scope>
    <scope>SUBCELLULAR LOCATION</scope>
    <scope>MUTAGENESIS OF GLU-194 AND GLU-321</scope>
    <source>
        <strain>JCM 7052 / CGMCC 1.3013 / IV-52</strain>
    </source>
</reference>
<reference key="3">
    <citation type="journal article" date="2023" name="Microbiome Res. Rep.">
        <title>Assimilation of arabinogalactan side chains with novel 3-O-beta-L-arabinopyranosyl-alpha-L-arabinofuranosidase in Bifidobacterium pseudocatenulatum.</title>
        <authorList>
            <person name="Sasaki Y."/>
            <person name="Yanagita M."/>
            <person name="Hashiguchi M."/>
            <person name="Horigome A."/>
            <person name="Xiao J.Z."/>
            <person name="Odamaki T."/>
            <person name="Kitahara K."/>
            <person name="Fujita K."/>
        </authorList>
    </citation>
    <scope>FUNCTION</scope>
    <scope>CATALYTIC ACTIVITY</scope>
    <scope>MUTAGENESIS OF ASN-119</scope>
</reference>
<proteinExistence type="evidence at protein level"/>
<evidence type="ECO:0000250" key="1">
    <source>
        <dbReference type="UniProtKB" id="P35475"/>
    </source>
</evidence>
<evidence type="ECO:0000255" key="2"/>
<evidence type="ECO:0000255" key="3">
    <source>
        <dbReference type="PROSITE-ProRule" id="PRU00523"/>
    </source>
</evidence>
<evidence type="ECO:0000256" key="4">
    <source>
        <dbReference type="SAM" id="MobiDB-lite"/>
    </source>
</evidence>
<evidence type="ECO:0000269" key="5">
    <source>
    </source>
</evidence>
<evidence type="ECO:0000269" key="6">
    <source>
    </source>
</evidence>
<evidence type="ECO:0000303" key="7">
    <source>
    </source>
</evidence>
<evidence type="ECO:0000305" key="8">
    <source>
    </source>
</evidence>
<evidence type="ECO:0000305" key="9">
    <source>
    </source>
</evidence>
<evidence type="ECO:0000312" key="10">
    <source>
        <dbReference type="EMBL" id="BBV22623.1"/>
    </source>
</evidence>
<accession>P0DXE8</accession>
<protein>
    <recommendedName>
        <fullName evidence="7">3-O-alpha-D-galactosyl-alpha-L-arabinofuranosidase</fullName>
        <shortName evidence="7">GAfase</shortName>
        <ecNumber evidence="5 6">3.2.1.215</ecNumber>
    </recommendedName>
</protein>
<name>GAASE_BIFLL</name>
<comment type="function">
    <text evidence="5 6">Hydrolase involved in the degradation of the gum arabic arabinogalactan protein (AGP) (PubMed:33674431). Catalyzes the release of 3-O-alpha-D-galactopyranosyl-L-arabinose (alpha-D-Galp-(1-&gt;3)-L-Ara) from gum arabic AGP (PubMed:33674431, PubMed:38047276). Can also release 3-O-beta-L-arabinopyranosyl-L-arabinose (beta-L-Arap-(1-&gt;3)-L-Ara) from gum arabic AGP and larch AGP, but the alpha-D-Galp-(1-&gt;3)-L-Ara release activity is 594-fold higher than the beta-L-Arap-(1-&gt;3)-L-Ara release activity (PubMed:33674431). Exhibits no reactivity toward p-nitrophenyl (pNP)-alpha-Araf or any other tested pNP substrate (PubMed:33674431). Plays a crucial role in gum arabic AGP assimilation in B.longum (PubMed:33674431).</text>
</comment>
<comment type="catalytic activity">
    <reaction evidence="5 6">
        <text>Hydrolysis of alpha-D-Galp-(1-&gt;3)-L-Araf disaccharides from non-reducing terminals in branches of type II arabinogalactan attached to proteins.</text>
        <dbReference type="EC" id="3.2.1.215"/>
    </reaction>
</comment>
<comment type="biophysicochemical properties">
    <kinetics>
        <KM evidence="5">0.633 mM for alpha-D-Galp-(1-&gt;3)-alpha-L-Araf-OMe</KM>
        <KM evidence="5">22.8 mM for beta-L-Arap-(1-&gt;3)-alpha-L-Araf-OMe</KM>
        <text evidence="5">kcat is 199 sec(-1) with alpha-D-Galp-(1-&gt;3)-alpha-L-Araf-OMe as substrate (PubMed:33674431). kcat is 12.1 sec(-1) with beta-L-Arap-(1-&gt;3)-alpha-L-Araf-OMe as substrate (PubMed:33674431).</text>
    </kinetics>
    <phDependence>
        <text evidence="5">Optimum pH is 4.5 with gum arabic AGP as substrate.</text>
    </phDependence>
    <temperatureDependence>
        <text evidence="5">Optimum temperature is 45-50 degrees Celsius with gum arabic AGP as substrate.</text>
    </temperatureDependence>
</comment>
<comment type="subcellular location">
    <subcellularLocation>
        <location evidence="8">Cell membrane</location>
        <topology evidence="2">Single-pass membrane protein</topology>
    </subcellularLocation>
    <subcellularLocation>
        <location evidence="8">Secreted</location>
        <location evidence="8">Cell wall</location>
    </subcellularLocation>
</comment>
<comment type="miscellaneous">
    <text evidence="5">This enzyme increases the growth of bifidobacteria in the human intestine by using the gum arabic arabinogalactan protein (AGP), which is commonly used as a food additive for emulsification and stabilization.</text>
</comment>
<comment type="similarity">
    <text evidence="8">Belongs to the glycosyl hydrolase 39 family.</text>
</comment>
<sequence>MGISRNRLVPGLVGLAASAAIVLPLGIGMPVSSATAEENAPVQTLNVDYGTTTGDFYGGSSGMLYGLGDEGSPTDAILDGARVQVTSQKPADGLQHPSADVLAVENQFFNNGGEELVVNLQDWYPDWSYNGGKRPGDTRSYKLDVDPNDAQYGTYTDNAPNDRWDFDEVLEVVMNKILANTSHPDNIVFMPFNEPDGGNWYASGDNASADIYKQFLTDWNDAYATIQKVWNQYKSGEKTNVNGVKPTADHALIAGPGDSVWRANRTKALLESSKAANTLPDVIVWHELGNGSLKNYRSHYNQYRSFEQELGITPRAINISEFGELRDMSVPGQLIQWMSMFESTKVQAQTAYWNYAGNLNDNMARANSANGGWWLYKWYGDLRGTQTVKVTSEHPDSVDNLQGVAAIDTKNRKATVLYGGANDATKIGANIPVTVHMTGLDQSVFGESVDVQVRENAYTGPDGVAATPRVVNVLSDQKLVNGTLDVTTTSIDRYAGYQLVVTPHQDVATSLDNAENGRSLQAIEAEDTTLSDGAKAYTKSDNTGSWGNFMFSGNGDVGNFKNGAKMTWNVDVPADGAYRLQLITAPAGFPGVNHVYVDGKSVGDLNVPAELALKEAAKWKYRGSAEIVLDGLTKGKHAITVEATDLDNESDKLLLYQVSRGDGTPVDQVTYPASDMRLDSGAVLAYDGNGTNGFANLNGGRADVFAHAWEAGYQNVTIAYNAAKGAHFVLSVNGQSAATVTAQSDGAQTSIVRVAFSEGINQLTLSGAAGVRVASVTTARASESDSKAIRFEAEDAQLSGGAKVQKDDASDASGKSFVAGLGNQFVTNESGKAGYGDQTRVEADANHVPTVAQNNKGTMTVTGVPAGAYNMVVRFSNDAFIGSHSYNPQVVDLGLQVREGDQEIARGSFRYTYTEKHFMNRSVTVTTHGGALTLGNWDEVGSRKAAVSWGVAPNVDSITFYPITDGNVIDSVSGVTVSGEGVSADGKASLKVGETLSLNASVTPDSVADKTVQWTSSDEQVATVDEHGVVKGVKAGTVTITATSVADSSRSGSVEVTVAEDSEQKPSGGDGDNNGEQTGKPDGNTGGQTSDSDAGADSGNNQKHMPLTGAAVAAVAGVAVLLAGAGLLLKRLRSRS</sequence>
<keyword id="KW-0119">Carbohydrate metabolism</keyword>
<keyword id="KW-1003">Cell membrane</keyword>
<keyword id="KW-0134">Cell wall</keyword>
<keyword id="KW-0326">Glycosidase</keyword>
<keyword id="KW-0378">Hydrolase</keyword>
<keyword id="KW-0472">Membrane</keyword>
<keyword id="KW-0677">Repeat</keyword>
<keyword id="KW-0964">Secreted</keyword>
<keyword id="KW-0732">Signal</keyword>
<keyword id="KW-0812">Transmembrane</keyword>
<keyword id="KW-1133">Transmembrane helix</keyword>
<dbReference type="EC" id="3.2.1.215" evidence="5 6"/>
<dbReference type="EMBL" id="AP022379">
    <property type="protein sequence ID" value="BBV22623.1"/>
    <property type="molecule type" value="Genomic_DNA"/>
</dbReference>
<dbReference type="SMR" id="P0DXE8"/>
<dbReference type="KEGG" id="ag:BBV22623"/>
<dbReference type="GO" id="GO:0005576">
    <property type="term" value="C:extracellular region"/>
    <property type="evidence" value="ECO:0007669"/>
    <property type="project" value="UniProtKB-KW"/>
</dbReference>
<dbReference type="GO" id="GO:0005886">
    <property type="term" value="C:plasma membrane"/>
    <property type="evidence" value="ECO:0007669"/>
    <property type="project" value="UniProtKB-SubCell"/>
</dbReference>
<dbReference type="GO" id="GO:0030246">
    <property type="term" value="F:carbohydrate binding"/>
    <property type="evidence" value="ECO:0007669"/>
    <property type="project" value="InterPro"/>
</dbReference>
<dbReference type="GO" id="GO:0016798">
    <property type="term" value="F:hydrolase activity, acting on glycosyl bonds"/>
    <property type="evidence" value="ECO:0007669"/>
    <property type="project" value="UniProtKB-KW"/>
</dbReference>
<dbReference type="Gene3D" id="2.60.40.1080">
    <property type="match status" value="1"/>
</dbReference>
<dbReference type="Gene3D" id="2.60.120.260">
    <property type="entry name" value="Galactose-binding domain-like"/>
    <property type="match status" value="3"/>
</dbReference>
<dbReference type="Gene3D" id="3.20.20.80">
    <property type="entry name" value="Glycosidases"/>
    <property type="match status" value="1"/>
</dbReference>
<dbReference type="InterPro" id="IPR003343">
    <property type="entry name" value="Big_2"/>
</dbReference>
<dbReference type="InterPro" id="IPR005084">
    <property type="entry name" value="CBM6"/>
</dbReference>
<dbReference type="InterPro" id="IPR008979">
    <property type="entry name" value="Galactose-bd-like_sf"/>
</dbReference>
<dbReference type="InterPro" id="IPR017853">
    <property type="entry name" value="Glycoside_hydrolase_SF"/>
</dbReference>
<dbReference type="InterPro" id="IPR008964">
    <property type="entry name" value="Invasin/intimin_cell_adhesion"/>
</dbReference>
<dbReference type="Pfam" id="PF02368">
    <property type="entry name" value="Big_2"/>
    <property type="match status" value="1"/>
</dbReference>
<dbReference type="SMART" id="SM00635">
    <property type="entry name" value="BID_2"/>
    <property type="match status" value="1"/>
</dbReference>
<dbReference type="SUPFAM" id="SSF51445">
    <property type="entry name" value="(Trans)glycosidases"/>
    <property type="match status" value="1"/>
</dbReference>
<dbReference type="SUPFAM" id="SSF49785">
    <property type="entry name" value="Galactose-binding domain-like"/>
    <property type="match status" value="1"/>
</dbReference>
<dbReference type="SUPFAM" id="SSF49373">
    <property type="entry name" value="Invasin/intimin cell-adhesion fragments"/>
    <property type="match status" value="1"/>
</dbReference>
<dbReference type="PROSITE" id="PS51175">
    <property type="entry name" value="CBM6"/>
    <property type="match status" value="2"/>
</dbReference>
<feature type="signal peptide" evidence="2">
    <location>
        <begin position="1"/>
        <end position="36"/>
    </location>
</feature>
<feature type="chain" id="PRO_0000461431" description="3-O-alpha-D-galactosyl-alpha-L-arabinofuranosidase">
    <location>
        <begin position="37"/>
        <end position="1136"/>
    </location>
</feature>
<feature type="transmembrane region" description="Helical" evidence="2">
    <location>
        <begin position="1109"/>
        <end position="1129"/>
    </location>
</feature>
<feature type="domain" description="CBM6 1" evidence="3">
    <location>
        <begin position="521"/>
        <end position="656"/>
    </location>
</feature>
<feature type="domain" description="CBM6 2" evidence="3">
    <location>
        <begin position="669"/>
        <end position="779"/>
    </location>
</feature>
<feature type="domain" description="BIG2" evidence="2">
    <location>
        <begin position="987"/>
        <end position="1045"/>
    </location>
</feature>
<feature type="region of interest" description="Disordered" evidence="4">
    <location>
        <begin position="1049"/>
        <end position="1104"/>
    </location>
</feature>
<feature type="compositionally biased region" description="Polar residues" evidence="4">
    <location>
        <begin position="1087"/>
        <end position="1103"/>
    </location>
</feature>
<feature type="active site" description="Proton donor" evidence="1">
    <location>
        <position position="194"/>
    </location>
</feature>
<feature type="active site" description="Nucleophile" evidence="1">
    <location>
        <position position="321"/>
    </location>
</feature>
<feature type="site" description="Important for substrate specificity" evidence="9">
    <location>
        <position position="119"/>
    </location>
</feature>
<feature type="mutagenesis site" description="Does not affect substrate specificity.">
    <original>N</original>
    <variation>D</variation>
    <location>
        <position position="119"/>
    </location>
</feature>
<feature type="mutagenesis site" description="Changes substrate specificity. Has 21.7-fold higher activity against beta-L-Arap-(1-3)-alpha-L-Araf-OMe than against alpha-D-Galp-(1-3)-alpha-L-Araf-OMe." evidence="6">
    <original>N</original>
    <variation>Y</variation>
    <location>
        <position position="119"/>
    </location>
</feature>
<feature type="mutagenesis site" description="Loss of activity." evidence="5">
    <original>E</original>
    <variation>Q</variation>
    <location>
        <position position="194"/>
    </location>
</feature>
<feature type="mutagenesis site" description="Loss of activity." evidence="5">
    <original>E</original>
    <variation>Q</variation>
    <location>
        <position position="321"/>
    </location>
</feature>
<gene>
    <name evidence="10" type="ORF">BLGA_00340</name>
</gene>
<organism>
    <name type="scientific">Bifidobacterium longum subsp. longum</name>
    <dbReference type="NCBI Taxonomy" id="1679"/>
    <lineage>
        <taxon>Bacteria</taxon>
        <taxon>Bacillati</taxon>
        <taxon>Actinomycetota</taxon>
        <taxon>Actinomycetes</taxon>
        <taxon>Bifidobacteriales</taxon>
        <taxon>Bifidobacteriaceae</taxon>
        <taxon>Bifidobacterium</taxon>
    </lineage>
</organism>